<name>SYC_BORT9</name>
<dbReference type="EC" id="6.1.1.16" evidence="1"/>
<dbReference type="EMBL" id="CP000049">
    <property type="protein sequence ID" value="AAX17922.1"/>
    <property type="molecule type" value="Genomic_DNA"/>
</dbReference>
<dbReference type="RefSeq" id="WP_011772540.1">
    <property type="nucleotide sequence ID" value="NC_008710.1"/>
</dbReference>
<dbReference type="SMR" id="A1R030"/>
<dbReference type="KEGG" id="btu:BT0599"/>
<dbReference type="eggNOG" id="COG0215">
    <property type="taxonomic scope" value="Bacteria"/>
</dbReference>
<dbReference type="HOGENOM" id="CLU_013528_0_1_12"/>
<dbReference type="Proteomes" id="UP000001205">
    <property type="component" value="Chromosome"/>
</dbReference>
<dbReference type="GO" id="GO:0005829">
    <property type="term" value="C:cytosol"/>
    <property type="evidence" value="ECO:0007669"/>
    <property type="project" value="TreeGrafter"/>
</dbReference>
<dbReference type="GO" id="GO:0005524">
    <property type="term" value="F:ATP binding"/>
    <property type="evidence" value="ECO:0007669"/>
    <property type="project" value="UniProtKB-UniRule"/>
</dbReference>
<dbReference type="GO" id="GO:0004817">
    <property type="term" value="F:cysteine-tRNA ligase activity"/>
    <property type="evidence" value="ECO:0007669"/>
    <property type="project" value="UniProtKB-UniRule"/>
</dbReference>
<dbReference type="GO" id="GO:0008270">
    <property type="term" value="F:zinc ion binding"/>
    <property type="evidence" value="ECO:0007669"/>
    <property type="project" value="UniProtKB-UniRule"/>
</dbReference>
<dbReference type="GO" id="GO:0006423">
    <property type="term" value="P:cysteinyl-tRNA aminoacylation"/>
    <property type="evidence" value="ECO:0007669"/>
    <property type="project" value="UniProtKB-UniRule"/>
</dbReference>
<dbReference type="CDD" id="cd00672">
    <property type="entry name" value="CysRS_core"/>
    <property type="match status" value="1"/>
</dbReference>
<dbReference type="Gene3D" id="1.20.120.1910">
    <property type="entry name" value="Cysteine-tRNA ligase, C-terminal anti-codon recognition domain"/>
    <property type="match status" value="1"/>
</dbReference>
<dbReference type="Gene3D" id="3.40.50.620">
    <property type="entry name" value="HUPs"/>
    <property type="match status" value="1"/>
</dbReference>
<dbReference type="HAMAP" id="MF_00041">
    <property type="entry name" value="Cys_tRNA_synth"/>
    <property type="match status" value="1"/>
</dbReference>
<dbReference type="InterPro" id="IPR015803">
    <property type="entry name" value="Cys-tRNA-ligase"/>
</dbReference>
<dbReference type="InterPro" id="IPR024909">
    <property type="entry name" value="Cys-tRNA/MSH_ligase"/>
</dbReference>
<dbReference type="InterPro" id="IPR014729">
    <property type="entry name" value="Rossmann-like_a/b/a_fold"/>
</dbReference>
<dbReference type="InterPro" id="IPR032678">
    <property type="entry name" value="tRNA-synt_1_cat_dom"/>
</dbReference>
<dbReference type="InterPro" id="IPR009080">
    <property type="entry name" value="tRNAsynth_Ia_anticodon-bd"/>
</dbReference>
<dbReference type="NCBIfam" id="TIGR00435">
    <property type="entry name" value="cysS"/>
    <property type="match status" value="1"/>
</dbReference>
<dbReference type="NCBIfam" id="NF011107">
    <property type="entry name" value="PRK14534.1"/>
    <property type="match status" value="1"/>
</dbReference>
<dbReference type="PANTHER" id="PTHR10890:SF3">
    <property type="entry name" value="CYSTEINE--TRNA LIGASE, CYTOPLASMIC"/>
    <property type="match status" value="1"/>
</dbReference>
<dbReference type="PANTHER" id="PTHR10890">
    <property type="entry name" value="CYSTEINYL-TRNA SYNTHETASE"/>
    <property type="match status" value="1"/>
</dbReference>
<dbReference type="Pfam" id="PF01406">
    <property type="entry name" value="tRNA-synt_1e"/>
    <property type="match status" value="1"/>
</dbReference>
<dbReference type="PRINTS" id="PR00983">
    <property type="entry name" value="TRNASYNTHCYS"/>
</dbReference>
<dbReference type="SUPFAM" id="SSF47323">
    <property type="entry name" value="Anticodon-binding domain of a subclass of class I aminoacyl-tRNA synthetases"/>
    <property type="match status" value="1"/>
</dbReference>
<dbReference type="SUPFAM" id="SSF52374">
    <property type="entry name" value="Nucleotidylyl transferase"/>
    <property type="match status" value="1"/>
</dbReference>
<gene>
    <name evidence="1" type="primary">cysS</name>
    <name type="ordered locus">BT0599</name>
</gene>
<protein>
    <recommendedName>
        <fullName evidence="1">Cysteine--tRNA ligase</fullName>
        <ecNumber evidence="1">6.1.1.16</ecNumber>
    </recommendedName>
    <alternativeName>
        <fullName evidence="1">Cysteinyl-tRNA synthetase</fullName>
        <shortName evidence="1">CysRS</shortName>
    </alternativeName>
</protein>
<comment type="catalytic activity">
    <reaction evidence="1">
        <text>tRNA(Cys) + L-cysteine + ATP = L-cysteinyl-tRNA(Cys) + AMP + diphosphate</text>
        <dbReference type="Rhea" id="RHEA:17773"/>
        <dbReference type="Rhea" id="RHEA-COMP:9661"/>
        <dbReference type="Rhea" id="RHEA-COMP:9679"/>
        <dbReference type="ChEBI" id="CHEBI:30616"/>
        <dbReference type="ChEBI" id="CHEBI:33019"/>
        <dbReference type="ChEBI" id="CHEBI:35235"/>
        <dbReference type="ChEBI" id="CHEBI:78442"/>
        <dbReference type="ChEBI" id="CHEBI:78517"/>
        <dbReference type="ChEBI" id="CHEBI:456215"/>
        <dbReference type="EC" id="6.1.1.16"/>
    </reaction>
</comment>
<comment type="cofactor">
    <cofactor evidence="1">
        <name>Zn(2+)</name>
        <dbReference type="ChEBI" id="CHEBI:29105"/>
    </cofactor>
    <text evidence="1">Binds 1 zinc ion per subunit.</text>
</comment>
<comment type="subunit">
    <text evidence="1">Monomer.</text>
</comment>
<comment type="subcellular location">
    <subcellularLocation>
        <location evidence="1">Cytoplasm</location>
    </subcellularLocation>
</comment>
<comment type="similarity">
    <text evidence="1">Belongs to the class-I aminoacyl-tRNA synthetase family.</text>
</comment>
<organism>
    <name type="scientific">Borrelia turicatae (strain 91E135)</name>
    <dbReference type="NCBI Taxonomy" id="314724"/>
    <lineage>
        <taxon>Bacteria</taxon>
        <taxon>Pseudomonadati</taxon>
        <taxon>Spirochaetota</taxon>
        <taxon>Spirochaetia</taxon>
        <taxon>Spirochaetales</taxon>
        <taxon>Borreliaceae</taxon>
        <taxon>Borrelia</taxon>
    </lineage>
</organism>
<feature type="chain" id="PRO_1000199043" description="Cysteine--tRNA ligase">
    <location>
        <begin position="1"/>
        <end position="481"/>
    </location>
</feature>
<feature type="short sequence motif" description="'HIGH' region">
    <location>
        <begin position="29"/>
        <end position="39"/>
    </location>
</feature>
<feature type="short sequence motif" description="'KMSKS' region">
    <location>
        <begin position="279"/>
        <end position="283"/>
    </location>
</feature>
<feature type="binding site" evidence="1">
    <location>
        <position position="27"/>
    </location>
    <ligand>
        <name>Zn(2+)</name>
        <dbReference type="ChEBI" id="CHEBI:29105"/>
    </ligand>
</feature>
<feature type="binding site" evidence="1">
    <location>
        <position position="222"/>
    </location>
    <ligand>
        <name>Zn(2+)</name>
        <dbReference type="ChEBI" id="CHEBI:29105"/>
    </ligand>
</feature>
<feature type="binding site" evidence="1">
    <location>
        <position position="247"/>
    </location>
    <ligand>
        <name>Zn(2+)</name>
        <dbReference type="ChEBI" id="CHEBI:29105"/>
    </ligand>
</feature>
<feature type="binding site" evidence="1">
    <location>
        <position position="251"/>
    </location>
    <ligand>
        <name>Zn(2+)</name>
        <dbReference type="ChEBI" id="CHEBI:29105"/>
    </ligand>
</feature>
<feature type="binding site" evidence="1">
    <location>
        <position position="282"/>
    </location>
    <ligand>
        <name>ATP</name>
        <dbReference type="ChEBI" id="CHEBI:30616"/>
    </ligand>
</feature>
<evidence type="ECO:0000255" key="1">
    <source>
        <dbReference type="HAMAP-Rule" id="MF_00041"/>
    </source>
</evidence>
<accession>A1R030</accession>
<reference key="1">
    <citation type="submission" date="2004-12" db="EMBL/GenBank/DDBJ databases">
        <title>The genome sequence of Borrelia hermsii and Borrelia turicatae: comparative analysis of two agents of endemic N. America relapsing fever.</title>
        <authorList>
            <person name="Porcella S.F."/>
            <person name="Raffel S.J."/>
            <person name="Schrumpf M.E."/>
            <person name="Montgomery B."/>
            <person name="Smith T."/>
            <person name="Schwan T.G."/>
        </authorList>
    </citation>
    <scope>NUCLEOTIDE SEQUENCE [LARGE SCALE GENOMIC DNA]</scope>
    <source>
        <strain>91E135</strain>
    </source>
</reference>
<keyword id="KW-0030">Aminoacyl-tRNA synthetase</keyword>
<keyword id="KW-0067">ATP-binding</keyword>
<keyword id="KW-0963">Cytoplasm</keyword>
<keyword id="KW-0436">Ligase</keyword>
<keyword id="KW-0479">Metal-binding</keyword>
<keyword id="KW-0547">Nucleotide-binding</keyword>
<keyword id="KW-0648">Protein biosynthesis</keyword>
<keyword id="KW-1185">Reference proteome</keyword>
<keyword id="KW-0862">Zinc</keyword>
<sequence length="481" mass="56072">MLLRLYNTKTKSLSEVKNFSDIKVYACGPTVYNYAHIGNFRTYIFEDLLIKSLRLLKYNVNYAMNITDIGHLTGEFDEGEDKVVKAARERGLTVYEISRFFTEAFFCDCEKLNIVRPDKVLIASEYIASMIEVIKVLEQNGFTYFVNGNVYFDTSLFKSYGQMAGINLNDFEFSSVSRVEVDPSKKNKSDFVLWFTNSKFKDQEMKWDSPWGFGYPSWHLECAAMNLDCFRSTLDIHLGGVDHIGVHHINEIAIAECYLNRMWCDIFVHGEFLIMEDEKMSKSNNNFITIQDLETNGFSPLDFRYFCLTAHYRTQLKFTFNNLRACKVARKNMLNKLTAVFSSLNQFDLLLLSKNYENIESVLEKRYYDSFLEKIAFDLSIPQALALLWDIIKDDNLSALSKLRLTFKFDEVLSLGLKEGVFREIEKDRINIDDAMNSLLEERRLAKIRKDFKRADEIREYFYSKGFVLIDTEEGTKVKRG</sequence>
<proteinExistence type="inferred from homology"/>